<protein>
    <recommendedName>
        <fullName evidence="1">Ribosomal protein bS6--L-glutamate ligase</fullName>
        <ecNumber evidence="1">6.3.2.-</ecNumber>
    </recommendedName>
    <alternativeName>
        <fullName evidence="1">Poly-alpha-glutamate synthase</fullName>
    </alternativeName>
    <alternativeName>
        <fullName evidence="1">Ribosomal protein bS6 modification protein</fullName>
    </alternativeName>
</protein>
<reference key="1">
    <citation type="journal article" date="2011" name="J. Bacteriol.">
        <title>Comparative genomics of 28 Salmonella enterica isolates: evidence for CRISPR-mediated adaptive sublineage evolution.</title>
        <authorList>
            <person name="Fricke W.F."/>
            <person name="Mammel M.K."/>
            <person name="McDermott P.F."/>
            <person name="Tartera C."/>
            <person name="White D.G."/>
            <person name="Leclerc J.E."/>
            <person name="Ravel J."/>
            <person name="Cebula T.A."/>
        </authorList>
    </citation>
    <scope>NUCLEOTIDE SEQUENCE [LARGE SCALE GENOMIC DNA]</scope>
    <source>
        <strain>CVM19633</strain>
    </source>
</reference>
<gene>
    <name evidence="1" type="primary">rimK</name>
    <name type="ordered locus">SeSA_A1028</name>
</gene>
<feature type="chain" id="PRO_1000146948" description="Ribosomal protein bS6--L-glutamate ligase">
    <location>
        <begin position="1"/>
        <end position="300"/>
    </location>
</feature>
<feature type="domain" description="ATP-grasp" evidence="1">
    <location>
        <begin position="104"/>
        <end position="287"/>
    </location>
</feature>
<feature type="binding site" evidence="1">
    <location>
        <position position="141"/>
    </location>
    <ligand>
        <name>ATP</name>
        <dbReference type="ChEBI" id="CHEBI:30616"/>
    </ligand>
</feature>
<feature type="binding site" evidence="1">
    <location>
        <begin position="178"/>
        <end position="179"/>
    </location>
    <ligand>
        <name>ATP</name>
        <dbReference type="ChEBI" id="CHEBI:30616"/>
    </ligand>
</feature>
<feature type="binding site" evidence="1">
    <location>
        <position position="187"/>
    </location>
    <ligand>
        <name>ATP</name>
        <dbReference type="ChEBI" id="CHEBI:30616"/>
    </ligand>
</feature>
<feature type="binding site" evidence="1">
    <location>
        <begin position="211"/>
        <end position="213"/>
    </location>
    <ligand>
        <name>ATP</name>
        <dbReference type="ChEBI" id="CHEBI:30616"/>
    </ligand>
</feature>
<feature type="binding site" evidence="1">
    <location>
        <position position="248"/>
    </location>
    <ligand>
        <name>Mg(2+)</name>
        <dbReference type="ChEBI" id="CHEBI:18420"/>
        <label>1</label>
    </ligand>
</feature>
<feature type="binding site" evidence="1">
    <location>
        <position position="248"/>
    </location>
    <ligand>
        <name>Mn(2+)</name>
        <dbReference type="ChEBI" id="CHEBI:29035"/>
        <label>1</label>
    </ligand>
</feature>
<feature type="binding site" evidence="1">
    <location>
        <position position="260"/>
    </location>
    <ligand>
        <name>Mg(2+)</name>
        <dbReference type="ChEBI" id="CHEBI:18420"/>
        <label>1</label>
    </ligand>
</feature>
<feature type="binding site" evidence="1">
    <location>
        <position position="260"/>
    </location>
    <ligand>
        <name>Mg(2+)</name>
        <dbReference type="ChEBI" id="CHEBI:18420"/>
        <label>2</label>
    </ligand>
</feature>
<feature type="binding site" evidence="1">
    <location>
        <position position="260"/>
    </location>
    <ligand>
        <name>Mn(2+)</name>
        <dbReference type="ChEBI" id="CHEBI:29035"/>
        <label>1</label>
    </ligand>
</feature>
<feature type="binding site" evidence="1">
    <location>
        <position position="260"/>
    </location>
    <ligand>
        <name>Mn(2+)</name>
        <dbReference type="ChEBI" id="CHEBI:29035"/>
        <label>2</label>
    </ligand>
</feature>
<feature type="binding site" evidence="1">
    <location>
        <position position="262"/>
    </location>
    <ligand>
        <name>Mg(2+)</name>
        <dbReference type="ChEBI" id="CHEBI:18420"/>
        <label>2</label>
    </ligand>
</feature>
<feature type="binding site" evidence="1">
    <location>
        <position position="262"/>
    </location>
    <ligand>
        <name>Mn(2+)</name>
        <dbReference type="ChEBI" id="CHEBI:29035"/>
        <label>2</label>
    </ligand>
</feature>
<organism>
    <name type="scientific">Salmonella schwarzengrund (strain CVM19633)</name>
    <dbReference type="NCBI Taxonomy" id="439843"/>
    <lineage>
        <taxon>Bacteria</taxon>
        <taxon>Pseudomonadati</taxon>
        <taxon>Pseudomonadota</taxon>
        <taxon>Gammaproteobacteria</taxon>
        <taxon>Enterobacterales</taxon>
        <taxon>Enterobacteriaceae</taxon>
        <taxon>Salmonella</taxon>
    </lineage>
</organism>
<accession>B4TRM8</accession>
<dbReference type="EC" id="6.3.2.-" evidence="1"/>
<dbReference type="EMBL" id="CP001127">
    <property type="protein sequence ID" value="ACF92093.1"/>
    <property type="molecule type" value="Genomic_DNA"/>
</dbReference>
<dbReference type="RefSeq" id="WP_000684366.1">
    <property type="nucleotide sequence ID" value="NC_011094.1"/>
</dbReference>
<dbReference type="SMR" id="B4TRM8"/>
<dbReference type="KEGG" id="sew:SeSA_A1028"/>
<dbReference type="HOGENOM" id="CLU_054353_0_1_6"/>
<dbReference type="Proteomes" id="UP000001865">
    <property type="component" value="Chromosome"/>
</dbReference>
<dbReference type="GO" id="GO:0005737">
    <property type="term" value="C:cytoplasm"/>
    <property type="evidence" value="ECO:0007669"/>
    <property type="project" value="TreeGrafter"/>
</dbReference>
<dbReference type="GO" id="GO:0005524">
    <property type="term" value="F:ATP binding"/>
    <property type="evidence" value="ECO:0007669"/>
    <property type="project" value="UniProtKB-UniRule"/>
</dbReference>
<dbReference type="GO" id="GO:0046872">
    <property type="term" value="F:metal ion binding"/>
    <property type="evidence" value="ECO:0007669"/>
    <property type="project" value="UniProtKB-KW"/>
</dbReference>
<dbReference type="GO" id="GO:0018169">
    <property type="term" value="F:ribosomal S6-glutamic acid ligase activity"/>
    <property type="evidence" value="ECO:0007669"/>
    <property type="project" value="UniProtKB-UniRule"/>
</dbReference>
<dbReference type="GO" id="GO:0036211">
    <property type="term" value="P:protein modification process"/>
    <property type="evidence" value="ECO:0007669"/>
    <property type="project" value="InterPro"/>
</dbReference>
<dbReference type="GO" id="GO:0009432">
    <property type="term" value="P:SOS response"/>
    <property type="evidence" value="ECO:0007669"/>
    <property type="project" value="TreeGrafter"/>
</dbReference>
<dbReference type="GO" id="GO:0006412">
    <property type="term" value="P:translation"/>
    <property type="evidence" value="ECO:0007669"/>
    <property type="project" value="UniProtKB-KW"/>
</dbReference>
<dbReference type="FunFam" id="3.40.50.20:FF:000004">
    <property type="entry name" value="Probable alpha-L-glutamate ligase"/>
    <property type="match status" value="1"/>
</dbReference>
<dbReference type="FunFam" id="3.30.1490.20:FF:000005">
    <property type="entry name" value="Probable alpha-L-glutamate ligase 1"/>
    <property type="match status" value="1"/>
</dbReference>
<dbReference type="FunFam" id="3.30.470.20:FF:000016">
    <property type="entry name" value="Ribosomal protein S6--L-glutamate ligase"/>
    <property type="match status" value="1"/>
</dbReference>
<dbReference type="Gene3D" id="3.40.50.20">
    <property type="match status" value="1"/>
</dbReference>
<dbReference type="Gene3D" id="3.30.1490.20">
    <property type="entry name" value="ATP-grasp fold, A domain"/>
    <property type="match status" value="1"/>
</dbReference>
<dbReference type="Gene3D" id="3.30.470.20">
    <property type="entry name" value="ATP-grasp fold, B domain"/>
    <property type="match status" value="1"/>
</dbReference>
<dbReference type="HAMAP" id="MF_01552">
    <property type="entry name" value="RimK"/>
    <property type="match status" value="1"/>
</dbReference>
<dbReference type="InterPro" id="IPR011761">
    <property type="entry name" value="ATP-grasp"/>
</dbReference>
<dbReference type="InterPro" id="IPR013651">
    <property type="entry name" value="ATP-grasp_RimK-type"/>
</dbReference>
<dbReference type="InterPro" id="IPR013815">
    <property type="entry name" value="ATP_grasp_subdomain_1"/>
</dbReference>
<dbReference type="InterPro" id="IPR023533">
    <property type="entry name" value="RimK"/>
</dbReference>
<dbReference type="InterPro" id="IPR041107">
    <property type="entry name" value="Rimk_N"/>
</dbReference>
<dbReference type="InterPro" id="IPR004666">
    <property type="entry name" value="Rp_bS6_RimK/Lys_biosynth_LsyX"/>
</dbReference>
<dbReference type="NCBIfam" id="NF007764">
    <property type="entry name" value="PRK10446.1"/>
    <property type="match status" value="1"/>
</dbReference>
<dbReference type="NCBIfam" id="TIGR00768">
    <property type="entry name" value="rimK_fam"/>
    <property type="match status" value="1"/>
</dbReference>
<dbReference type="PANTHER" id="PTHR21621:SF7">
    <property type="entry name" value="RIBOSOMAL PROTEIN BS6--L-GLUTAMATE LIGASE"/>
    <property type="match status" value="1"/>
</dbReference>
<dbReference type="PANTHER" id="PTHR21621">
    <property type="entry name" value="RIBOSOMAL PROTEIN S6 MODIFICATION PROTEIN"/>
    <property type="match status" value="1"/>
</dbReference>
<dbReference type="Pfam" id="PF08443">
    <property type="entry name" value="RimK"/>
    <property type="match status" value="1"/>
</dbReference>
<dbReference type="Pfam" id="PF18030">
    <property type="entry name" value="Rimk_N"/>
    <property type="match status" value="1"/>
</dbReference>
<dbReference type="SUPFAM" id="SSF56059">
    <property type="entry name" value="Glutathione synthetase ATP-binding domain-like"/>
    <property type="match status" value="1"/>
</dbReference>
<dbReference type="PROSITE" id="PS50975">
    <property type="entry name" value="ATP_GRASP"/>
    <property type="match status" value="1"/>
</dbReference>
<evidence type="ECO:0000255" key="1">
    <source>
        <dbReference type="HAMAP-Rule" id="MF_01552"/>
    </source>
</evidence>
<comment type="function">
    <text evidence="1">An L-glutamate ligase that catalyzes the ATP-dependent post-translational addition of glutamate residues to the C-terminus of ribosomal protein bS6 (RpsF). Is also able to catalyze the synthesis of poly-alpha-glutamate in vitro, via ATP hydrolysis from unprotected glutamate as substrate. The number of glutamate residues added to either RpsF or to poly-alpha-glutamate changes with pH.</text>
</comment>
<comment type="cofactor">
    <cofactor evidence="1">
        <name>Mg(2+)</name>
        <dbReference type="ChEBI" id="CHEBI:18420"/>
    </cofactor>
    <cofactor evidence="1">
        <name>Mn(2+)</name>
        <dbReference type="ChEBI" id="CHEBI:29035"/>
    </cofactor>
    <text evidence="1">Binds 2 magnesium or manganese ions per subunit.</text>
</comment>
<comment type="similarity">
    <text evidence="1">Belongs to the RimK family.</text>
</comment>
<keyword id="KW-0067">ATP-binding</keyword>
<keyword id="KW-0436">Ligase</keyword>
<keyword id="KW-0460">Magnesium</keyword>
<keyword id="KW-0464">Manganese</keyword>
<keyword id="KW-0479">Metal-binding</keyword>
<keyword id="KW-0547">Nucleotide-binding</keyword>
<keyword id="KW-0648">Protein biosynthesis</keyword>
<proteinExistence type="inferred from homology"/>
<sequence>MKIAILSRDGTLYSCKRLREAAMRRGHLVEILDPLSCYMNINPAASSIHYKGRRLPHYDAVIPRIGSAITFYGTAALRQFELLGSYPLNESVAITRARDKLRSLQLLARQGIDLPITGIAHSPDDTSDLIKMVGGAPLVVKLVEGTQGIGVVLAETRQAAESVIDAFRGLNAHILVQEYIAEAKGCDIRCLVVGNEVVAAIERCAKAGDFRSNLHRGGVASIATITPRERDIAIKAAQTLGLDVAGVDILRAARGPLVMEVNASPGLEGIEKTTGVDIAGRMIQWIERHATPEFCLKIGG</sequence>
<name>RIMK_SALSV</name>